<feature type="chain" id="PRO_1000052479" description="Large ribosomal subunit protein uL4">
    <location>
        <begin position="1"/>
        <end position="206"/>
    </location>
</feature>
<reference key="1">
    <citation type="submission" date="2006-09" db="EMBL/GenBank/DDBJ databases">
        <title>Complete sequence of Rhodopseudomonas palustris BisA53.</title>
        <authorList>
            <consortium name="US DOE Joint Genome Institute"/>
            <person name="Copeland A."/>
            <person name="Lucas S."/>
            <person name="Lapidus A."/>
            <person name="Barry K."/>
            <person name="Detter J.C."/>
            <person name="Glavina del Rio T."/>
            <person name="Hammon N."/>
            <person name="Israni S."/>
            <person name="Dalin E."/>
            <person name="Tice H."/>
            <person name="Pitluck S."/>
            <person name="Chain P."/>
            <person name="Malfatti S."/>
            <person name="Shin M."/>
            <person name="Vergez L."/>
            <person name="Schmutz J."/>
            <person name="Larimer F."/>
            <person name="Land M."/>
            <person name="Hauser L."/>
            <person name="Pelletier D.A."/>
            <person name="Kyrpides N."/>
            <person name="Kim E."/>
            <person name="Harwood C.S."/>
            <person name="Oda Y."/>
            <person name="Richardson P."/>
        </authorList>
    </citation>
    <scope>NUCLEOTIDE SEQUENCE [LARGE SCALE GENOMIC DNA]</scope>
    <source>
        <strain>BisA53</strain>
    </source>
</reference>
<evidence type="ECO:0000255" key="1">
    <source>
        <dbReference type="HAMAP-Rule" id="MF_01328"/>
    </source>
</evidence>
<evidence type="ECO:0000305" key="2"/>
<proteinExistence type="inferred from homology"/>
<sequence length="206" mass="22209">MELKVTTLEGKDAGSVQLSDEIFGLDPRSDIIQRCVIWQLAKRQAGTHKAKGRAEIWRTGKKMYKQKGTGGARHGSQRVPQFRGGGRAFGPVVRSHAIDLPKKVRAMALKHALSAKAKDGGLIVIDQATLDSAKTKALVGHFAGLGLTSALIIDGAELNNGFAVAARNIPNIDVLPIQGINVYDILRRQKLVLTKAAVDALEARFK</sequence>
<organism>
    <name type="scientific">Rhodopseudomonas palustris (strain BisA53)</name>
    <dbReference type="NCBI Taxonomy" id="316055"/>
    <lineage>
        <taxon>Bacteria</taxon>
        <taxon>Pseudomonadati</taxon>
        <taxon>Pseudomonadota</taxon>
        <taxon>Alphaproteobacteria</taxon>
        <taxon>Hyphomicrobiales</taxon>
        <taxon>Nitrobacteraceae</taxon>
        <taxon>Rhodopseudomonas</taxon>
    </lineage>
</organism>
<comment type="function">
    <text evidence="1">One of the primary rRNA binding proteins, this protein initially binds near the 5'-end of the 23S rRNA. It is important during the early stages of 50S assembly. It makes multiple contacts with different domains of the 23S rRNA in the assembled 50S subunit and ribosome.</text>
</comment>
<comment type="function">
    <text evidence="1">Forms part of the polypeptide exit tunnel.</text>
</comment>
<comment type="subunit">
    <text evidence="1">Part of the 50S ribosomal subunit.</text>
</comment>
<comment type="similarity">
    <text evidence="1">Belongs to the universal ribosomal protein uL4 family.</text>
</comment>
<keyword id="KW-0687">Ribonucleoprotein</keyword>
<keyword id="KW-0689">Ribosomal protein</keyword>
<keyword id="KW-0694">RNA-binding</keyword>
<keyword id="KW-0699">rRNA-binding</keyword>
<gene>
    <name evidence="1" type="primary">rplD</name>
    <name type="ordered locus">RPE_3585</name>
</gene>
<name>RL4_RHOP5</name>
<protein>
    <recommendedName>
        <fullName evidence="1">Large ribosomal subunit protein uL4</fullName>
    </recommendedName>
    <alternativeName>
        <fullName evidence="2">50S ribosomal protein L4</fullName>
    </alternativeName>
</protein>
<accession>Q07KL9</accession>
<dbReference type="EMBL" id="CP000463">
    <property type="protein sequence ID" value="ABJ07515.1"/>
    <property type="molecule type" value="Genomic_DNA"/>
</dbReference>
<dbReference type="SMR" id="Q07KL9"/>
<dbReference type="STRING" id="316055.RPE_3585"/>
<dbReference type="KEGG" id="rpe:RPE_3585"/>
<dbReference type="eggNOG" id="COG0088">
    <property type="taxonomic scope" value="Bacteria"/>
</dbReference>
<dbReference type="HOGENOM" id="CLU_041575_5_1_5"/>
<dbReference type="OrthoDB" id="9803201at2"/>
<dbReference type="GO" id="GO:1990904">
    <property type="term" value="C:ribonucleoprotein complex"/>
    <property type="evidence" value="ECO:0007669"/>
    <property type="project" value="UniProtKB-KW"/>
</dbReference>
<dbReference type="GO" id="GO:0005840">
    <property type="term" value="C:ribosome"/>
    <property type="evidence" value="ECO:0007669"/>
    <property type="project" value="UniProtKB-KW"/>
</dbReference>
<dbReference type="GO" id="GO:0019843">
    <property type="term" value="F:rRNA binding"/>
    <property type="evidence" value="ECO:0007669"/>
    <property type="project" value="UniProtKB-UniRule"/>
</dbReference>
<dbReference type="GO" id="GO:0003735">
    <property type="term" value="F:structural constituent of ribosome"/>
    <property type="evidence" value="ECO:0007669"/>
    <property type="project" value="InterPro"/>
</dbReference>
<dbReference type="GO" id="GO:0006412">
    <property type="term" value="P:translation"/>
    <property type="evidence" value="ECO:0007669"/>
    <property type="project" value="UniProtKB-UniRule"/>
</dbReference>
<dbReference type="Gene3D" id="3.40.1370.10">
    <property type="match status" value="1"/>
</dbReference>
<dbReference type="HAMAP" id="MF_01328_B">
    <property type="entry name" value="Ribosomal_uL4_B"/>
    <property type="match status" value="1"/>
</dbReference>
<dbReference type="InterPro" id="IPR002136">
    <property type="entry name" value="Ribosomal_uL4"/>
</dbReference>
<dbReference type="InterPro" id="IPR013005">
    <property type="entry name" value="Ribosomal_uL4-like"/>
</dbReference>
<dbReference type="InterPro" id="IPR023574">
    <property type="entry name" value="Ribosomal_uL4_dom_sf"/>
</dbReference>
<dbReference type="NCBIfam" id="TIGR03953">
    <property type="entry name" value="rplD_bact"/>
    <property type="match status" value="1"/>
</dbReference>
<dbReference type="PANTHER" id="PTHR10746">
    <property type="entry name" value="50S RIBOSOMAL PROTEIN L4"/>
    <property type="match status" value="1"/>
</dbReference>
<dbReference type="PANTHER" id="PTHR10746:SF6">
    <property type="entry name" value="LARGE RIBOSOMAL SUBUNIT PROTEIN UL4M"/>
    <property type="match status" value="1"/>
</dbReference>
<dbReference type="Pfam" id="PF00573">
    <property type="entry name" value="Ribosomal_L4"/>
    <property type="match status" value="1"/>
</dbReference>
<dbReference type="SUPFAM" id="SSF52166">
    <property type="entry name" value="Ribosomal protein L4"/>
    <property type="match status" value="1"/>
</dbReference>